<feature type="chain" id="PRO_1000120074" description="Large ribosomal subunit protein bL32">
    <location>
        <begin position="1"/>
        <end position="61"/>
    </location>
</feature>
<feature type="region of interest" description="Disordered" evidence="2">
    <location>
        <begin position="1"/>
        <end position="44"/>
    </location>
</feature>
<feature type="compositionally biased region" description="Basic residues" evidence="2">
    <location>
        <begin position="7"/>
        <end position="16"/>
    </location>
</feature>
<feature type="compositionally biased region" description="Polar residues" evidence="2">
    <location>
        <begin position="25"/>
        <end position="34"/>
    </location>
</feature>
<accession>B0VTY5</accession>
<reference key="1">
    <citation type="journal article" date="2008" name="PLoS ONE">
        <title>Comparative analysis of Acinetobacters: three genomes for three lifestyles.</title>
        <authorList>
            <person name="Vallenet D."/>
            <person name="Nordmann P."/>
            <person name="Barbe V."/>
            <person name="Poirel L."/>
            <person name="Mangenot S."/>
            <person name="Bataille E."/>
            <person name="Dossat C."/>
            <person name="Gas S."/>
            <person name="Kreimeyer A."/>
            <person name="Lenoble P."/>
            <person name="Oztas S."/>
            <person name="Poulain J."/>
            <person name="Segurens B."/>
            <person name="Robert C."/>
            <person name="Abergel C."/>
            <person name="Claverie J.-M."/>
            <person name="Raoult D."/>
            <person name="Medigue C."/>
            <person name="Weissenbach J."/>
            <person name="Cruveiller S."/>
        </authorList>
    </citation>
    <scope>NUCLEOTIDE SEQUENCE [LARGE SCALE GENOMIC DNA]</scope>
    <source>
        <strain>SDF</strain>
    </source>
</reference>
<sequence length="61" mass="7080">MAVQQNRKSRSRRDMRRSHDALTENALTVDQATGETHRRHHVTKDGFYRGRQLFAKAADAE</sequence>
<keyword id="KW-0687">Ribonucleoprotein</keyword>
<keyword id="KW-0689">Ribosomal protein</keyword>
<name>RL32_ACIBS</name>
<comment type="similarity">
    <text evidence="1">Belongs to the bacterial ribosomal protein bL32 family.</text>
</comment>
<evidence type="ECO:0000255" key="1">
    <source>
        <dbReference type="HAMAP-Rule" id="MF_00340"/>
    </source>
</evidence>
<evidence type="ECO:0000256" key="2">
    <source>
        <dbReference type="SAM" id="MobiDB-lite"/>
    </source>
</evidence>
<evidence type="ECO:0000305" key="3"/>
<proteinExistence type="inferred from homology"/>
<dbReference type="EMBL" id="CU468230">
    <property type="protein sequence ID" value="CAP01948.1"/>
    <property type="molecule type" value="Genomic_DNA"/>
</dbReference>
<dbReference type="SMR" id="B0VTY5"/>
<dbReference type="KEGG" id="abm:ABSDF2642"/>
<dbReference type="HOGENOM" id="CLU_129084_2_1_6"/>
<dbReference type="Proteomes" id="UP000001741">
    <property type="component" value="Chromosome"/>
</dbReference>
<dbReference type="GO" id="GO:0015934">
    <property type="term" value="C:large ribosomal subunit"/>
    <property type="evidence" value="ECO:0007669"/>
    <property type="project" value="InterPro"/>
</dbReference>
<dbReference type="GO" id="GO:0003735">
    <property type="term" value="F:structural constituent of ribosome"/>
    <property type="evidence" value="ECO:0007669"/>
    <property type="project" value="InterPro"/>
</dbReference>
<dbReference type="GO" id="GO:0006412">
    <property type="term" value="P:translation"/>
    <property type="evidence" value="ECO:0007669"/>
    <property type="project" value="UniProtKB-UniRule"/>
</dbReference>
<dbReference type="HAMAP" id="MF_00340">
    <property type="entry name" value="Ribosomal_bL32"/>
    <property type="match status" value="1"/>
</dbReference>
<dbReference type="InterPro" id="IPR002677">
    <property type="entry name" value="Ribosomal_bL32"/>
</dbReference>
<dbReference type="InterPro" id="IPR044957">
    <property type="entry name" value="Ribosomal_bL32_bact"/>
</dbReference>
<dbReference type="InterPro" id="IPR011332">
    <property type="entry name" value="Ribosomal_zn-bd"/>
</dbReference>
<dbReference type="NCBIfam" id="TIGR01031">
    <property type="entry name" value="rpmF_bact"/>
    <property type="match status" value="1"/>
</dbReference>
<dbReference type="PANTHER" id="PTHR35534">
    <property type="entry name" value="50S RIBOSOMAL PROTEIN L32"/>
    <property type="match status" value="1"/>
</dbReference>
<dbReference type="PANTHER" id="PTHR35534:SF1">
    <property type="entry name" value="LARGE RIBOSOMAL SUBUNIT PROTEIN BL32"/>
    <property type="match status" value="1"/>
</dbReference>
<dbReference type="Pfam" id="PF01783">
    <property type="entry name" value="Ribosomal_L32p"/>
    <property type="match status" value="1"/>
</dbReference>
<dbReference type="SUPFAM" id="SSF57829">
    <property type="entry name" value="Zn-binding ribosomal proteins"/>
    <property type="match status" value="1"/>
</dbReference>
<protein>
    <recommendedName>
        <fullName evidence="1">Large ribosomal subunit protein bL32</fullName>
    </recommendedName>
    <alternativeName>
        <fullName evidence="3">50S ribosomal protein L32</fullName>
    </alternativeName>
</protein>
<organism>
    <name type="scientific">Acinetobacter baumannii (strain SDF)</name>
    <dbReference type="NCBI Taxonomy" id="509170"/>
    <lineage>
        <taxon>Bacteria</taxon>
        <taxon>Pseudomonadati</taxon>
        <taxon>Pseudomonadota</taxon>
        <taxon>Gammaproteobacteria</taxon>
        <taxon>Moraxellales</taxon>
        <taxon>Moraxellaceae</taxon>
        <taxon>Acinetobacter</taxon>
        <taxon>Acinetobacter calcoaceticus/baumannii complex</taxon>
    </lineage>
</organism>
<gene>
    <name evidence="1" type="primary">rpmF</name>
    <name type="ordered locus">ABSDF2642</name>
</gene>